<organismHost>
    <name type="scientific">Homo sapiens</name>
    <name type="common">Human</name>
    <dbReference type="NCBI Taxonomy" id="9606"/>
</organismHost>
<evidence type="ECO:0000255" key="1">
    <source>
        <dbReference type="HAMAP-Rule" id="MF_04126"/>
    </source>
</evidence>
<reference key="1">
    <citation type="journal article" date="2004" name="Virus Res.">
        <title>Cloning and sequence analysis of dsRNA segments 5, 6 and 7 of a novel non-group A, B, C adult rotavirus that caused an outbreak of gastroenteritis in China.</title>
        <authorList>
            <person name="Yang H."/>
            <person name="Makeyev E.V."/>
            <person name="Kang Z."/>
            <person name="Ji S."/>
            <person name="Bamford D.H."/>
            <person name="van Dijk A.A."/>
        </authorList>
    </citation>
    <scope>NUCLEOTIDE SEQUENCE [GENOMIC RNA]</scope>
</reference>
<reference key="2">
    <citation type="journal article" date="2008" name="J. Gen. Virol.">
        <title>Molecular characterization of a novel adult diarrhoea rotavirus strain J19 isolated in China and its significance for the evolution and origin of group B rotaviruses.</title>
        <authorList>
            <person name="Jiang S."/>
            <person name="Ji S."/>
            <person name="Tang Q."/>
            <person name="Cui X."/>
            <person name="Yang H."/>
            <person name="Kan B."/>
            <person name="Gao S."/>
        </authorList>
    </citation>
    <scope>NUCLEOTIDE SEQUENCE [GENOMIC RNA]</scope>
</reference>
<accession>Q45UF5</accession>
<accession>Q5Y9B0</accession>
<organism>
    <name type="scientific">Rotavirus X (strain RVX/Human/China/NADRV-J19/1997/GXP[X])</name>
    <name type="common">RV ADRV-N</name>
    <name type="synonym">Rotavirus (isolate novel adult diarrhea rotavirus-J19)</name>
    <dbReference type="NCBI Taxonomy" id="335103"/>
    <lineage>
        <taxon>Viruses</taxon>
        <taxon>Riboviria</taxon>
        <taxon>Orthornavirae</taxon>
        <taxon>Duplornaviricota</taxon>
        <taxon>Resentoviricetes</taxon>
        <taxon>Reovirales</taxon>
        <taxon>Sedoreoviridae</taxon>
        <taxon>Rotavirus</taxon>
        <taxon>Rotavirus H</taxon>
    </lineage>
</organism>
<proteinExistence type="inferred from homology"/>
<name>VP6_ROTJ1</name>
<sequence length="396" mass="42922">MDLIETINAVVELQHRVRNLSPNTNIYQDGQTTINDYNAIASRCNGKVYNLRDQIAQLSPFQVHMPVIPISTILSTDDHETMSAGIESLFDVLAAAIRTEGSRQNRAVVTKSIEPEVLKAVLDIGIRSQFSENPYANMLQVDTAKMEQQLEPIDDPLASQRINMLAAGGATNNTGGGYHALVGRATGKTGIITIIQGRPGAVTFNLNMKVPCSGVLSLTLLPAPGVIQLSLGNQPPNNIPVHAECVDVSTVFTEGDIVIRFELAGRVVGNANKLGTLNFPLCDRISITIEPWNANKQNNANANFNNWPAGTAQRQPTISLFVNIINASSLIDYETHSKYLAGATYLMGTTFSEDSFIASPPNVVWTMSSLLSGAPPQYIHWTRKIACMIAAFSCKI</sequence>
<feature type="chain" id="PRO_0000369861" description="Intermediate capsid protein VP6">
    <location>
        <begin position="1"/>
        <end position="396"/>
    </location>
</feature>
<keyword id="KW-0167">Capsid protein</keyword>
<keyword id="KW-1154">Intermediate capsid protein</keyword>
<keyword id="KW-1185">Reference proteome</keyword>
<keyword id="KW-0946">Virion</keyword>
<dbReference type="EMBL" id="AY632080">
    <property type="protein sequence ID" value="AAU88189.1"/>
    <property type="molecule type" value="Genomic_RNA"/>
</dbReference>
<dbReference type="EMBL" id="DQ113902">
    <property type="protein sequence ID" value="AAZ03490.1"/>
    <property type="molecule type" value="Genomic_RNA"/>
</dbReference>
<dbReference type="RefSeq" id="YP_392495.1">
    <property type="nucleotide sequence ID" value="NC_007553.1"/>
</dbReference>
<dbReference type="GeneID" id="5076655"/>
<dbReference type="KEGG" id="vg:5076655"/>
<dbReference type="OrthoDB" id="13985at10239"/>
<dbReference type="Proteomes" id="UP000007663">
    <property type="component" value="Genome"/>
</dbReference>
<dbReference type="GO" id="GO:0019031">
    <property type="term" value="C:viral envelope"/>
    <property type="evidence" value="ECO:0007669"/>
    <property type="project" value="UniProtKB-UniRule"/>
</dbReference>
<dbReference type="GO" id="GO:0039626">
    <property type="term" value="C:viral intermediate capsid"/>
    <property type="evidence" value="ECO:0007669"/>
    <property type="project" value="UniProtKB-UniRule"/>
</dbReference>
<dbReference type="GO" id="GO:0046789">
    <property type="term" value="F:host cell surface receptor binding"/>
    <property type="evidence" value="ECO:0007669"/>
    <property type="project" value="UniProtKB-UniRule"/>
</dbReference>
<dbReference type="GO" id="GO:0005198">
    <property type="term" value="F:structural molecule activity"/>
    <property type="evidence" value="ECO:0007669"/>
    <property type="project" value="UniProtKB-UniRule"/>
</dbReference>
<dbReference type="GO" id="GO:0019064">
    <property type="term" value="P:fusion of virus membrane with host plasma membrane"/>
    <property type="evidence" value="ECO:0007669"/>
    <property type="project" value="UniProtKB-UniRule"/>
</dbReference>
<dbReference type="HAMAP" id="MF_04126">
    <property type="entry name" value="Rota_VP6"/>
    <property type="match status" value="1"/>
</dbReference>
<dbReference type="InterPro" id="IPR001385">
    <property type="entry name" value="Rotavirus_A/C_VP6"/>
</dbReference>
<comment type="function">
    <text evidence="1">Intermediate capsid protein that self assembles to form an icosahedral capsid with a T=13 symmetry, which consists of 230 trimers of VP6, with channels at each of its five-fold vertices. This capsid constitutes the middle concentric layer of the viral mature particle. The innermost VP2 capsid and the intermediate VP6 capsid remain intact following cell entry to protect the dsRNA from degradation and to prevent unfavorable antiviral responses in the host cell during all the replication cycle of the virus. Nascent transcripts are transcribed within the structural confines of this double-layered particle (DLP) and are extruded through the channels at the five-fold axes. VP6 is required for the transcription activity of the DLP.</text>
</comment>
<comment type="subunit">
    <text evidence="1">Homotrimer. Interacts with the inner capsid protein VP2. Interacts with the outer capsid glycoprotein VP7.</text>
</comment>
<comment type="subcellular location">
    <subcellularLocation>
        <location evidence="1">Virion</location>
    </subcellularLocation>
    <text evidence="1">Component of the intermediate capsid. Also found in spherical cytoplasmic structures, called virus factories, that appear early after infection and are the site of viral replication and packaging.</text>
</comment>
<comment type="similarity">
    <text evidence="1">Belongs to the rotavirus VP6 family.</text>
</comment>
<protein>
    <recommendedName>
        <fullName evidence="1">Intermediate capsid protein VP6</fullName>
    </recommendedName>
</protein>